<gene>
    <name type="primary">ntdA</name>
    <name type="synonym">yhjL</name>
    <name type="ordered locus">BSU10550</name>
</gene>
<feature type="chain" id="PRO_0000110006" description="3-oxo-glucose-6-phosphate:glutamate aminotransferase">
    <location>
        <begin position="1"/>
        <end position="441"/>
    </location>
</feature>
<feature type="binding site">
    <location>
        <begin position="98"/>
        <end position="99"/>
    </location>
    <ligand>
        <name>substrate</name>
    </ligand>
</feature>
<feature type="binding site">
    <location>
        <begin position="125"/>
        <end position="126"/>
    </location>
    <ligand>
        <name>pyridoxal 5'-phosphate</name>
        <dbReference type="ChEBI" id="CHEBI:597326"/>
    </ligand>
</feature>
<feature type="binding site" evidence="4">
    <location>
        <position position="151"/>
    </location>
    <ligand>
        <name>substrate</name>
    </ligand>
</feature>
<feature type="binding site" evidence="4">
    <location>
        <position position="225"/>
    </location>
    <ligand>
        <name>pyridoxal 5'-phosphate</name>
        <dbReference type="ChEBI" id="CHEBI:597326"/>
    </ligand>
</feature>
<feature type="binding site" evidence="4">
    <location>
        <position position="242"/>
    </location>
    <ligand>
        <name>pyridoxal 5'-phosphate</name>
        <dbReference type="ChEBI" id="CHEBI:597326"/>
    </ligand>
</feature>
<feature type="binding site">
    <location>
        <begin position="244"/>
        <end position="246"/>
    </location>
    <ligand>
        <name>substrate</name>
    </ligand>
</feature>
<feature type="binding site" evidence="4">
    <location>
        <position position="274"/>
    </location>
    <ligand>
        <name>substrate</name>
    </ligand>
</feature>
<feature type="binding site" evidence="4">
    <location>
        <position position="282"/>
    </location>
    <ligand>
        <name>substrate</name>
    </ligand>
</feature>
<feature type="binding site" evidence="4">
    <location>
        <position position="292"/>
    </location>
    <ligand>
        <name>pyridoxal 5'-phosphate</name>
        <dbReference type="ChEBI" id="CHEBI:597326"/>
    </ligand>
</feature>
<feature type="binding site" evidence="4">
    <location>
        <position position="379"/>
    </location>
    <ligand>
        <name>substrate</name>
    </ligand>
</feature>
<feature type="modified residue" description="N6-(pyridoxal phosphate)lysine">
    <location>
        <position position="247"/>
    </location>
</feature>
<feature type="strand" evidence="8">
    <location>
        <begin position="5"/>
        <end position="7"/>
    </location>
</feature>
<feature type="helix" evidence="8">
    <location>
        <begin position="11"/>
        <end position="22"/>
    </location>
</feature>
<feature type="strand" evidence="8">
    <location>
        <begin position="30"/>
        <end position="32"/>
    </location>
</feature>
<feature type="helix" evidence="8">
    <location>
        <begin position="36"/>
        <end position="38"/>
    </location>
</feature>
<feature type="helix" evidence="8">
    <location>
        <begin position="39"/>
        <end position="44"/>
    </location>
</feature>
<feature type="helix" evidence="8">
    <location>
        <begin position="51"/>
        <end position="54"/>
    </location>
</feature>
<feature type="helix" evidence="8">
    <location>
        <begin position="72"/>
        <end position="75"/>
    </location>
</feature>
<feature type="helix" evidence="8">
    <location>
        <begin position="78"/>
        <end position="91"/>
    </location>
</feature>
<feature type="helix" evidence="8">
    <location>
        <begin position="92"/>
        <end position="94"/>
    </location>
</feature>
<feature type="strand" evidence="8">
    <location>
        <begin position="97"/>
        <end position="100"/>
    </location>
</feature>
<feature type="helix" evidence="8">
    <location>
        <begin position="101"/>
        <end position="114"/>
    </location>
</feature>
<feature type="strand" evidence="8">
    <location>
        <begin position="117"/>
        <end position="123"/>
    </location>
</feature>
<feature type="helix" evidence="8">
    <location>
        <begin position="125"/>
        <end position="135"/>
    </location>
</feature>
<feature type="strand" evidence="8">
    <location>
        <begin position="143"/>
        <end position="146"/>
    </location>
</feature>
<feature type="strand" evidence="8">
    <location>
        <begin position="148"/>
        <end position="150"/>
    </location>
</feature>
<feature type="helix" evidence="8">
    <location>
        <begin position="153"/>
        <end position="161"/>
    </location>
</feature>
<feature type="strand" evidence="8">
    <location>
        <begin position="164"/>
        <end position="167"/>
    </location>
</feature>
<feature type="turn" evidence="8">
    <location>
        <begin position="172"/>
        <end position="174"/>
    </location>
</feature>
<feature type="helix" evidence="8">
    <location>
        <begin position="179"/>
        <end position="181"/>
    </location>
</feature>
<feature type="helix" evidence="8">
    <location>
        <begin position="183"/>
        <end position="185"/>
    </location>
</feature>
<feature type="strand" evidence="8">
    <location>
        <begin position="190"/>
        <end position="193"/>
    </location>
</feature>
<feature type="helix" evidence="8">
    <location>
        <begin position="198"/>
        <end position="200"/>
    </location>
</feature>
<feature type="helix" evidence="8">
    <location>
        <begin position="205"/>
        <end position="215"/>
    </location>
</feature>
<feature type="strand" evidence="8">
    <location>
        <begin position="218"/>
        <end position="222"/>
    </location>
</feature>
<feature type="turn" evidence="8">
    <location>
        <begin position="230"/>
        <end position="235"/>
    </location>
</feature>
<feature type="strand" evidence="8">
    <location>
        <begin position="237"/>
        <end position="242"/>
    </location>
</feature>
<feature type="strand" evidence="8">
    <location>
        <begin position="247"/>
        <end position="249"/>
    </location>
</feature>
<feature type="strand" evidence="8">
    <location>
        <begin position="256"/>
        <end position="261"/>
    </location>
</feature>
<feature type="helix" evidence="8">
    <location>
        <begin position="263"/>
        <end position="273"/>
    </location>
</feature>
<feature type="strand" evidence="7">
    <location>
        <begin position="285"/>
        <end position="288"/>
    </location>
</feature>
<feature type="helix" evidence="8">
    <location>
        <begin position="297"/>
        <end position="306"/>
    </location>
</feature>
<feature type="helix" evidence="8">
    <location>
        <begin position="307"/>
        <end position="309"/>
    </location>
</feature>
<feature type="helix" evidence="8">
    <location>
        <begin position="310"/>
        <end position="327"/>
    </location>
</feature>
<feature type="helix" evidence="8">
    <location>
        <begin position="329"/>
        <end position="333"/>
    </location>
</feature>
<feature type="strand" evidence="8">
    <location>
        <begin position="344"/>
        <end position="346"/>
    </location>
</feature>
<feature type="strand" evidence="8">
    <location>
        <begin position="349"/>
        <end position="354"/>
    </location>
</feature>
<feature type="turn" evidence="8">
    <location>
        <begin position="357"/>
        <end position="359"/>
    </location>
</feature>
<feature type="helix" evidence="8">
    <location>
        <begin position="360"/>
        <end position="371"/>
    </location>
</feature>
<feature type="helix" evidence="8">
    <location>
        <begin position="383"/>
        <end position="385"/>
    </location>
</feature>
<feature type="helix" evidence="8">
    <location>
        <begin position="389"/>
        <end position="394"/>
    </location>
</feature>
<feature type="helix" evidence="8">
    <location>
        <begin position="401"/>
        <end position="409"/>
    </location>
</feature>
<feature type="strand" evidence="8">
    <location>
        <begin position="410"/>
        <end position="413"/>
    </location>
</feature>
<feature type="helix" evidence="8">
    <location>
        <begin position="421"/>
        <end position="439"/>
    </location>
</feature>
<name>NTDA_BACSU</name>
<sequence length="441" mass="50141">MQKQVKISGKSKENMSLLKHLKGDVQGKELVIEDSIVNERWKQVLKEKIDIEHDLFNYQKNREISKVPFLPVDRLITNDEVEDILNTLTEVLPTGKFTSGPYLEQFEKVLSTYLHKRYVIATSSGTDAIMIGLLALGLNPGDEVIMPANSFSATENAVLASGGVPIYVDINPQTFCIDPDKIEEAITPYTKFILPVHLYGKHSDMQHIRQIANRYKLKVIEDACQGIGLTDLGKYADITTLSFNPYKNFGVCGKAGAIATDNEELAKKCIQFSYHGFEVNVKNKKVINFGFNSKMDNLQAAIGLERMKYLSLNNFKRLFLADRYITQLAELQNKGYIELPELSEDHVWHLFPIKVRTEDRADIMTKLNEDFGVQTDVYYPILSHMQKTPLVQDKYAGLQLVHTEKAHSQVLHLPLYPSFTLEEQDRVMEGLFHVIKQEIGV</sequence>
<reference key="1">
    <citation type="journal article" date="1998" name="Microbiology">
        <title>The 172 kb prkA-addAB region from 83 degrees to 97 degrees of the Bacillus subtilis chromosome contains several dysfunctional genes, the glyB marker, many genes encoding transporter proteins, and the ubiquitous hit gene.</title>
        <authorList>
            <person name="Noback M.A."/>
            <person name="Holsappel S."/>
            <person name="Kiewiet R."/>
            <person name="Terpstra P."/>
            <person name="Wambutt R."/>
            <person name="Wedler H."/>
            <person name="Venema G."/>
            <person name="Bron S."/>
        </authorList>
    </citation>
    <scope>NUCLEOTIDE SEQUENCE [GENOMIC DNA]</scope>
    <source>
        <strain>168</strain>
    </source>
</reference>
<reference key="2">
    <citation type="journal article" date="1997" name="Nature">
        <title>The complete genome sequence of the Gram-positive bacterium Bacillus subtilis.</title>
        <authorList>
            <person name="Kunst F."/>
            <person name="Ogasawara N."/>
            <person name="Moszer I."/>
            <person name="Albertini A.M."/>
            <person name="Alloni G."/>
            <person name="Azevedo V."/>
            <person name="Bertero M.G."/>
            <person name="Bessieres P."/>
            <person name="Bolotin A."/>
            <person name="Borchert S."/>
            <person name="Borriss R."/>
            <person name="Boursier L."/>
            <person name="Brans A."/>
            <person name="Braun M."/>
            <person name="Brignell S.C."/>
            <person name="Bron S."/>
            <person name="Brouillet S."/>
            <person name="Bruschi C.V."/>
            <person name="Caldwell B."/>
            <person name="Capuano V."/>
            <person name="Carter N.M."/>
            <person name="Choi S.-K."/>
            <person name="Codani J.-J."/>
            <person name="Connerton I.F."/>
            <person name="Cummings N.J."/>
            <person name="Daniel R.A."/>
            <person name="Denizot F."/>
            <person name="Devine K.M."/>
            <person name="Duesterhoeft A."/>
            <person name="Ehrlich S.D."/>
            <person name="Emmerson P.T."/>
            <person name="Entian K.-D."/>
            <person name="Errington J."/>
            <person name="Fabret C."/>
            <person name="Ferrari E."/>
            <person name="Foulger D."/>
            <person name="Fritz C."/>
            <person name="Fujita M."/>
            <person name="Fujita Y."/>
            <person name="Fuma S."/>
            <person name="Galizzi A."/>
            <person name="Galleron N."/>
            <person name="Ghim S.-Y."/>
            <person name="Glaser P."/>
            <person name="Goffeau A."/>
            <person name="Golightly E.J."/>
            <person name="Grandi G."/>
            <person name="Guiseppi G."/>
            <person name="Guy B.J."/>
            <person name="Haga K."/>
            <person name="Haiech J."/>
            <person name="Harwood C.R."/>
            <person name="Henaut A."/>
            <person name="Hilbert H."/>
            <person name="Holsappel S."/>
            <person name="Hosono S."/>
            <person name="Hullo M.-F."/>
            <person name="Itaya M."/>
            <person name="Jones L.-M."/>
            <person name="Joris B."/>
            <person name="Karamata D."/>
            <person name="Kasahara Y."/>
            <person name="Klaerr-Blanchard M."/>
            <person name="Klein C."/>
            <person name="Kobayashi Y."/>
            <person name="Koetter P."/>
            <person name="Koningstein G."/>
            <person name="Krogh S."/>
            <person name="Kumano M."/>
            <person name="Kurita K."/>
            <person name="Lapidus A."/>
            <person name="Lardinois S."/>
            <person name="Lauber J."/>
            <person name="Lazarevic V."/>
            <person name="Lee S.-M."/>
            <person name="Levine A."/>
            <person name="Liu H."/>
            <person name="Masuda S."/>
            <person name="Mauel C."/>
            <person name="Medigue C."/>
            <person name="Medina N."/>
            <person name="Mellado R.P."/>
            <person name="Mizuno M."/>
            <person name="Moestl D."/>
            <person name="Nakai S."/>
            <person name="Noback M."/>
            <person name="Noone D."/>
            <person name="O'Reilly M."/>
            <person name="Ogawa K."/>
            <person name="Ogiwara A."/>
            <person name="Oudega B."/>
            <person name="Park S.-H."/>
            <person name="Parro V."/>
            <person name="Pohl T.M."/>
            <person name="Portetelle D."/>
            <person name="Porwollik S."/>
            <person name="Prescott A.M."/>
            <person name="Presecan E."/>
            <person name="Pujic P."/>
            <person name="Purnelle B."/>
            <person name="Rapoport G."/>
            <person name="Rey M."/>
            <person name="Reynolds S."/>
            <person name="Rieger M."/>
            <person name="Rivolta C."/>
            <person name="Rocha E."/>
            <person name="Roche B."/>
            <person name="Rose M."/>
            <person name="Sadaie Y."/>
            <person name="Sato T."/>
            <person name="Scanlan E."/>
            <person name="Schleich S."/>
            <person name="Schroeter R."/>
            <person name="Scoffone F."/>
            <person name="Sekiguchi J."/>
            <person name="Sekowska A."/>
            <person name="Seror S.J."/>
            <person name="Serror P."/>
            <person name="Shin B.-S."/>
            <person name="Soldo B."/>
            <person name="Sorokin A."/>
            <person name="Tacconi E."/>
            <person name="Takagi T."/>
            <person name="Takahashi H."/>
            <person name="Takemaru K."/>
            <person name="Takeuchi M."/>
            <person name="Tamakoshi A."/>
            <person name="Tanaka T."/>
            <person name="Terpstra P."/>
            <person name="Tognoni A."/>
            <person name="Tosato V."/>
            <person name="Uchiyama S."/>
            <person name="Vandenbol M."/>
            <person name="Vannier F."/>
            <person name="Vassarotti A."/>
            <person name="Viari A."/>
            <person name="Wambutt R."/>
            <person name="Wedler E."/>
            <person name="Wedler H."/>
            <person name="Weitzenegger T."/>
            <person name="Winters P."/>
            <person name="Wipat A."/>
            <person name="Yamamoto H."/>
            <person name="Yamane K."/>
            <person name="Yasumoto K."/>
            <person name="Yata K."/>
            <person name="Yoshida K."/>
            <person name="Yoshikawa H.-F."/>
            <person name="Zumstein E."/>
            <person name="Yoshikawa H."/>
            <person name="Danchin A."/>
        </authorList>
    </citation>
    <scope>NUCLEOTIDE SEQUENCE [LARGE SCALE GENOMIC DNA]</scope>
    <source>
        <strain>168</strain>
    </source>
</reference>
<reference key="3">
    <citation type="journal article" date="2004" name="J. Biol. Chem.">
        <title>RNA polymerase mutation activates the production of a dormant antibiotic 3,3'-neotrehalosadiamine via an autoinduction mechanism in Bacillus subtilis.</title>
        <authorList>
            <person name="Inaoka T."/>
            <person name="Takahashi K."/>
            <person name="Yada H."/>
            <person name="Yoshida M."/>
            <person name="Ochi K."/>
        </authorList>
    </citation>
    <scope>FUNCTION IN THE NEOTREHALOSADIAMINE BIOSYNTHESIS</scope>
    <scope>INDUCTION</scope>
    <source>
        <strain>168 / 61884</strain>
    </source>
</reference>
<reference key="4">
    <citation type="journal article" date="2007" name="J. Bacteriol.">
        <title>Glucose uptake pathway-specific regulation of synthesis of neotrehalosadiamine, a novel autoinducer produced in Bacillus subtilis.</title>
        <authorList>
            <person name="Inaoka T."/>
            <person name="Ochi K."/>
        </authorList>
    </citation>
    <scope>INDUCTION</scope>
    <source>
        <strain>168 / Marburg / ATCC 6051 / DSM 10 / JCM 1465 / NBRC 13719 / NCIMB 3610 / NRRL NRS-744 / VKM B-501</strain>
    </source>
</reference>
<reference key="5">
    <citation type="journal article" date="2013" name="J. Am. Chem. Soc.">
        <title>A previously unrecognized kanosamine biosynthesis pathway in Bacillus subtilis.</title>
        <authorList>
            <person name="Vetter N.D."/>
            <person name="Langill D.M."/>
            <person name="Anjum S."/>
            <person name="Boisvert-Martel J."/>
            <person name="Jagdhane R.C."/>
            <person name="Omene E."/>
            <person name="Zheng H."/>
            <person name="van Straaten K.E."/>
            <person name="Asiamah I."/>
            <person name="Krol E.S."/>
            <person name="Sanders D.A."/>
            <person name="Palmer D.R."/>
        </authorList>
    </citation>
    <scope>FUNCTION IN THE KANOSAMINE BIOSYNTHESIS AND AS AN AMINOTRANSFERASE</scope>
    <scope>CATALYTIC ACTIVITY</scope>
    <scope>SUBSTRATE SPECIFICITY</scope>
</reference>
<reference key="6">
    <citation type="journal article" date="2013" name="J. Biol. Chem.">
        <title>The structure of NtdA, a sugar aminotransferase involved in the kanosamine biosynthetic pathway in Bacillus subtilis, reveals a new subclass of aminotransferases.</title>
        <authorList>
            <person name="van Straaten K.E."/>
            <person name="Ko J.B."/>
            <person name="Jagdhane R."/>
            <person name="Anjum S."/>
            <person name="Palmer D.R."/>
            <person name="Sanders D.A."/>
        </authorList>
    </citation>
    <scope>X-RAY CRYSTALLOGRAPHY (2.31 ANGSTROMS) IN COMPLEX WITH PYRIDOXAL PHOSPHATE AND SUBSTRATE</scope>
    <scope>FUNCTION</scope>
    <scope>SUBSTRATE SPECIFICITY</scope>
    <scope>COFACTOR</scope>
    <scope>SUBUNIT</scope>
    <source>
        <strain>168</strain>
    </source>
</reference>
<proteinExistence type="evidence at protein level"/>
<dbReference type="EC" id="2.6.1.104"/>
<dbReference type="EMBL" id="Y14081">
    <property type="protein sequence ID" value="CAA74474.1"/>
    <property type="molecule type" value="Genomic_DNA"/>
</dbReference>
<dbReference type="EMBL" id="AL009126">
    <property type="protein sequence ID" value="CAB12895.1"/>
    <property type="molecule type" value="Genomic_DNA"/>
</dbReference>
<dbReference type="PIR" id="C69834">
    <property type="entry name" value="C69834"/>
</dbReference>
<dbReference type="RefSeq" id="NP_388936.1">
    <property type="nucleotide sequence ID" value="NC_000964.3"/>
</dbReference>
<dbReference type="RefSeq" id="WP_003245503.1">
    <property type="nucleotide sequence ID" value="NZ_OZ025638.1"/>
</dbReference>
<dbReference type="PDB" id="4K2B">
    <property type="method" value="X-ray"/>
    <property type="resolution" value="2.31 A"/>
    <property type="chains" value="A/B=1-441"/>
</dbReference>
<dbReference type="PDB" id="4K2I">
    <property type="method" value="X-ray"/>
    <property type="resolution" value="2.22 A"/>
    <property type="chains" value="A/B=1-441"/>
</dbReference>
<dbReference type="PDB" id="4K2M">
    <property type="method" value="X-ray"/>
    <property type="resolution" value="1.71 A"/>
    <property type="chains" value="A/B=1-441"/>
</dbReference>
<dbReference type="PDBsum" id="4K2B"/>
<dbReference type="PDBsum" id="4K2I"/>
<dbReference type="PDBsum" id="4K2M"/>
<dbReference type="SMR" id="O07566"/>
<dbReference type="FunCoup" id="O07566">
    <property type="interactions" value="17"/>
</dbReference>
<dbReference type="STRING" id="224308.BSU10550"/>
<dbReference type="PaxDb" id="224308-BSU10550"/>
<dbReference type="EnsemblBacteria" id="CAB12895">
    <property type="protein sequence ID" value="CAB12895"/>
    <property type="gene ID" value="BSU_10550"/>
</dbReference>
<dbReference type="GeneID" id="939788"/>
<dbReference type="KEGG" id="bsu:BSU10550"/>
<dbReference type="PATRIC" id="fig|224308.179.peg.1134"/>
<dbReference type="eggNOG" id="COG0399">
    <property type="taxonomic scope" value="Bacteria"/>
</dbReference>
<dbReference type="InParanoid" id="O07566"/>
<dbReference type="OrthoDB" id="9810913at2"/>
<dbReference type="PhylomeDB" id="O07566"/>
<dbReference type="BioCyc" id="BSUB:BSU10550-MONOMER"/>
<dbReference type="BioCyc" id="MetaCyc:BSU10550-MONOMER"/>
<dbReference type="BRENDA" id="2.6.1.104">
    <property type="organism ID" value="658"/>
</dbReference>
<dbReference type="UniPathway" id="UPA01036"/>
<dbReference type="EvolutionaryTrace" id="O07566"/>
<dbReference type="Proteomes" id="UP000001570">
    <property type="component" value="Chromosome"/>
</dbReference>
<dbReference type="GO" id="GO:0030170">
    <property type="term" value="F:pyridoxal phosphate binding"/>
    <property type="evidence" value="ECO:0000314"/>
    <property type="project" value="UniProtKB"/>
</dbReference>
<dbReference type="GO" id="GO:0008483">
    <property type="term" value="F:transaminase activity"/>
    <property type="evidence" value="ECO:0000314"/>
    <property type="project" value="UniProtKB"/>
</dbReference>
<dbReference type="GO" id="GO:0017000">
    <property type="term" value="P:antibiotic biosynthetic process"/>
    <property type="evidence" value="ECO:0000314"/>
    <property type="project" value="UniProtKB"/>
</dbReference>
<dbReference type="GO" id="GO:0000271">
    <property type="term" value="P:polysaccharide biosynthetic process"/>
    <property type="evidence" value="ECO:0000318"/>
    <property type="project" value="GO_Central"/>
</dbReference>
<dbReference type="CDD" id="cd00616">
    <property type="entry name" value="AHBA_syn"/>
    <property type="match status" value="1"/>
</dbReference>
<dbReference type="Gene3D" id="3.90.1150.10">
    <property type="entry name" value="Aspartate Aminotransferase, domain 1"/>
    <property type="match status" value="1"/>
</dbReference>
<dbReference type="Gene3D" id="3.40.640.10">
    <property type="entry name" value="Type I PLP-dependent aspartate aminotransferase-like (Major domain)"/>
    <property type="match status" value="1"/>
</dbReference>
<dbReference type="InterPro" id="IPR000653">
    <property type="entry name" value="DegT/StrS_aminotransferase"/>
</dbReference>
<dbReference type="InterPro" id="IPR054367">
    <property type="entry name" value="NtdA_N"/>
</dbReference>
<dbReference type="InterPro" id="IPR015424">
    <property type="entry name" value="PyrdxlP-dep_Trfase"/>
</dbReference>
<dbReference type="InterPro" id="IPR015421">
    <property type="entry name" value="PyrdxlP-dep_Trfase_major"/>
</dbReference>
<dbReference type="InterPro" id="IPR015422">
    <property type="entry name" value="PyrdxlP-dep_Trfase_small"/>
</dbReference>
<dbReference type="PANTHER" id="PTHR30244:SF36">
    <property type="entry name" value="3-OXO-GLUCOSE-6-PHOSPHATE:GLUTAMATE AMINOTRANSFERASE"/>
    <property type="match status" value="1"/>
</dbReference>
<dbReference type="PANTHER" id="PTHR30244">
    <property type="entry name" value="TRANSAMINASE"/>
    <property type="match status" value="1"/>
</dbReference>
<dbReference type="Pfam" id="PF01041">
    <property type="entry name" value="DegT_DnrJ_EryC1"/>
    <property type="match status" value="1"/>
</dbReference>
<dbReference type="Pfam" id="PF22127">
    <property type="entry name" value="NtdA_N"/>
    <property type="match status" value="1"/>
</dbReference>
<dbReference type="PIRSF" id="PIRSF000390">
    <property type="entry name" value="PLP_StrS"/>
    <property type="match status" value="1"/>
</dbReference>
<dbReference type="SUPFAM" id="SSF53383">
    <property type="entry name" value="PLP-dependent transferases"/>
    <property type="match status" value="1"/>
</dbReference>
<keyword id="KW-0002">3D-structure</keyword>
<keyword id="KW-0032">Aminotransferase</keyword>
<keyword id="KW-0045">Antibiotic biosynthesis</keyword>
<keyword id="KW-0663">Pyridoxal phosphate</keyword>
<keyword id="KW-1185">Reference proteome</keyword>
<keyword id="KW-0808">Transferase</keyword>
<accession>O07566</accession>
<accession>Q796S0</accession>
<comment type="function">
    <text evidence="1 3 4">Involved in the biosynthesis of kanosamine (3-amino-3-deoxy-D-glucose), which is known to have antibiotic and antifungal properties, and to be a precursor of the antibiotic neotrehalosadiamine (3,3'-diamino-3,3'-dideoxy-alpha,beta-trehalose (NTD)). Catalyzes the reversible pyridoxal phosphate-dependent transamination of 3-dehydro-alpha-D-glucose 6-phosphate to form alpha-D-kanosamine-6-phosphate. It can only use alpha-anomer and glutamate is the only amino donor.</text>
</comment>
<comment type="catalytic activity">
    <reaction evidence="3">
        <text>3-dehydro-D-glucose 6-phosphate + L-glutamate = D-kanosamine 6-phosphate + 2-oxoglutarate</text>
        <dbReference type="Rhea" id="RHEA:37551"/>
        <dbReference type="ChEBI" id="CHEBI:16810"/>
        <dbReference type="ChEBI" id="CHEBI:29985"/>
        <dbReference type="ChEBI" id="CHEBI:72748"/>
        <dbReference type="ChEBI" id="CHEBI:75052"/>
        <dbReference type="EC" id="2.6.1.104"/>
    </reaction>
</comment>
<comment type="cofactor">
    <cofactor evidence="4">
        <name>pyridoxal 5'-phosphate</name>
        <dbReference type="ChEBI" id="CHEBI:597326"/>
    </cofactor>
</comment>
<comment type="pathway">
    <text>Antibiotic biosynthesis; kanosamine biosynthesis.</text>
</comment>
<comment type="subunit">
    <text evidence="4">Homodimer.</text>
</comment>
<comment type="induction">
    <text evidence="1 2">Induced by neotrehalosadiamine.</text>
</comment>
<comment type="miscellaneous">
    <text evidence="6">The production of neotrehalosadiamine is dormant in the wild-type strain. A mutation in the beta subunit of RNA polymerase activates the production of the neotrehalosadiamine (PubMed:14612444).</text>
</comment>
<comment type="similarity">
    <text evidence="5">Belongs to the DegT/DnrJ/EryC1 family.</text>
</comment>
<organism>
    <name type="scientific">Bacillus subtilis (strain 168)</name>
    <dbReference type="NCBI Taxonomy" id="224308"/>
    <lineage>
        <taxon>Bacteria</taxon>
        <taxon>Bacillati</taxon>
        <taxon>Bacillota</taxon>
        <taxon>Bacilli</taxon>
        <taxon>Bacillales</taxon>
        <taxon>Bacillaceae</taxon>
        <taxon>Bacillus</taxon>
    </lineage>
</organism>
<protein>
    <recommendedName>
        <fullName>3-oxo-glucose-6-phosphate:glutamate aminotransferase</fullName>
        <ecNumber>2.6.1.104</ecNumber>
    </recommendedName>
    <alternativeName>
        <fullName>3-dehydro-glucose-6-phosphate--glutamate transaminase</fullName>
    </alternativeName>
    <alternativeName>
        <fullName>Kanosamine 6-phosphate transaminase</fullName>
    </alternativeName>
</protein>
<evidence type="ECO:0000269" key="1">
    <source>
    </source>
</evidence>
<evidence type="ECO:0000269" key="2">
    <source>
    </source>
</evidence>
<evidence type="ECO:0000269" key="3">
    <source>
    </source>
</evidence>
<evidence type="ECO:0000269" key="4">
    <source>
    </source>
</evidence>
<evidence type="ECO:0000305" key="5"/>
<evidence type="ECO:0000305" key="6">
    <source>
    </source>
</evidence>
<evidence type="ECO:0007829" key="7">
    <source>
        <dbReference type="PDB" id="4K2I"/>
    </source>
</evidence>
<evidence type="ECO:0007829" key="8">
    <source>
        <dbReference type="PDB" id="4K2M"/>
    </source>
</evidence>